<dbReference type="EC" id="2.7.4.3" evidence="1"/>
<dbReference type="EMBL" id="AE017308">
    <property type="protein sequence ID" value="AAT27741.1"/>
    <property type="molecule type" value="Genomic_DNA"/>
</dbReference>
<dbReference type="RefSeq" id="WP_011264775.1">
    <property type="nucleotide sequence ID" value="NC_006908.1"/>
</dbReference>
<dbReference type="SMR" id="Q6KI35"/>
<dbReference type="STRING" id="267748.MMOB2550"/>
<dbReference type="KEGG" id="mmo:MMOB2550"/>
<dbReference type="eggNOG" id="COG0563">
    <property type="taxonomic scope" value="Bacteria"/>
</dbReference>
<dbReference type="HOGENOM" id="CLU_032354_1_2_14"/>
<dbReference type="OrthoDB" id="9805030at2"/>
<dbReference type="UniPathway" id="UPA00588">
    <property type="reaction ID" value="UER00649"/>
</dbReference>
<dbReference type="Proteomes" id="UP000009072">
    <property type="component" value="Chromosome"/>
</dbReference>
<dbReference type="GO" id="GO:0005737">
    <property type="term" value="C:cytoplasm"/>
    <property type="evidence" value="ECO:0007669"/>
    <property type="project" value="UniProtKB-SubCell"/>
</dbReference>
<dbReference type="GO" id="GO:0004017">
    <property type="term" value="F:adenylate kinase activity"/>
    <property type="evidence" value="ECO:0007669"/>
    <property type="project" value="UniProtKB-UniRule"/>
</dbReference>
<dbReference type="GO" id="GO:0005524">
    <property type="term" value="F:ATP binding"/>
    <property type="evidence" value="ECO:0007669"/>
    <property type="project" value="UniProtKB-UniRule"/>
</dbReference>
<dbReference type="GO" id="GO:0044209">
    <property type="term" value="P:AMP salvage"/>
    <property type="evidence" value="ECO:0007669"/>
    <property type="project" value="UniProtKB-UniRule"/>
</dbReference>
<dbReference type="CDD" id="cd01428">
    <property type="entry name" value="ADK"/>
    <property type="match status" value="1"/>
</dbReference>
<dbReference type="Gene3D" id="3.40.50.300">
    <property type="entry name" value="P-loop containing nucleotide triphosphate hydrolases"/>
    <property type="match status" value="1"/>
</dbReference>
<dbReference type="HAMAP" id="MF_00235">
    <property type="entry name" value="Adenylate_kinase_Adk"/>
    <property type="match status" value="1"/>
</dbReference>
<dbReference type="InterPro" id="IPR006259">
    <property type="entry name" value="Adenyl_kin_sub"/>
</dbReference>
<dbReference type="InterPro" id="IPR000850">
    <property type="entry name" value="Adenylat/UMP-CMP_kin"/>
</dbReference>
<dbReference type="InterPro" id="IPR033690">
    <property type="entry name" value="Adenylat_kinase_CS"/>
</dbReference>
<dbReference type="InterPro" id="IPR007862">
    <property type="entry name" value="Adenylate_kinase_lid-dom"/>
</dbReference>
<dbReference type="InterPro" id="IPR027417">
    <property type="entry name" value="P-loop_NTPase"/>
</dbReference>
<dbReference type="NCBIfam" id="TIGR01351">
    <property type="entry name" value="adk"/>
    <property type="match status" value="1"/>
</dbReference>
<dbReference type="PANTHER" id="PTHR23359">
    <property type="entry name" value="NUCLEOTIDE KINASE"/>
    <property type="match status" value="1"/>
</dbReference>
<dbReference type="Pfam" id="PF00406">
    <property type="entry name" value="ADK"/>
    <property type="match status" value="1"/>
</dbReference>
<dbReference type="Pfam" id="PF05191">
    <property type="entry name" value="ADK_lid"/>
    <property type="match status" value="1"/>
</dbReference>
<dbReference type="PRINTS" id="PR00094">
    <property type="entry name" value="ADENYLTKNASE"/>
</dbReference>
<dbReference type="SUPFAM" id="SSF52540">
    <property type="entry name" value="P-loop containing nucleoside triphosphate hydrolases"/>
    <property type="match status" value="1"/>
</dbReference>
<dbReference type="PROSITE" id="PS00113">
    <property type="entry name" value="ADENYLATE_KINASE"/>
    <property type="match status" value="1"/>
</dbReference>
<name>KAD_MYCM1</name>
<comment type="function">
    <text evidence="1">Catalyzes the reversible transfer of the terminal phosphate group between ATP and AMP. Plays an important role in cellular energy homeostasis and in adenine nucleotide metabolism.</text>
</comment>
<comment type="catalytic activity">
    <reaction evidence="1">
        <text>AMP + ATP = 2 ADP</text>
        <dbReference type="Rhea" id="RHEA:12973"/>
        <dbReference type="ChEBI" id="CHEBI:30616"/>
        <dbReference type="ChEBI" id="CHEBI:456215"/>
        <dbReference type="ChEBI" id="CHEBI:456216"/>
        <dbReference type="EC" id="2.7.4.3"/>
    </reaction>
</comment>
<comment type="pathway">
    <text evidence="1">Purine metabolism; AMP biosynthesis via salvage pathway; AMP from ADP: step 1/1.</text>
</comment>
<comment type="subunit">
    <text evidence="1">Monomer.</text>
</comment>
<comment type="subcellular location">
    <subcellularLocation>
        <location evidence="1">Cytoplasm</location>
    </subcellularLocation>
</comment>
<comment type="domain">
    <text evidence="1">Consists of three domains, a large central CORE domain and two small peripheral domains, NMPbind and LID, which undergo movements during catalysis. The LID domain closes over the site of phosphoryl transfer upon ATP binding. Assembling and dissambling the active center during each catalytic cycle provides an effective means to prevent ATP hydrolysis.</text>
</comment>
<comment type="similarity">
    <text evidence="1">Belongs to the adenylate kinase family.</text>
</comment>
<feature type="chain" id="PRO_0000158800" description="Adenylate kinase">
    <location>
        <begin position="1"/>
        <end position="217"/>
    </location>
</feature>
<feature type="region of interest" description="NMP" evidence="1">
    <location>
        <begin position="32"/>
        <end position="61"/>
    </location>
</feature>
<feature type="region of interest" description="LID" evidence="1">
    <location>
        <begin position="125"/>
        <end position="165"/>
    </location>
</feature>
<feature type="binding site" evidence="1">
    <location>
        <begin position="12"/>
        <end position="17"/>
    </location>
    <ligand>
        <name>ATP</name>
        <dbReference type="ChEBI" id="CHEBI:30616"/>
    </ligand>
</feature>
<feature type="binding site" evidence="1">
    <location>
        <position position="33"/>
    </location>
    <ligand>
        <name>AMP</name>
        <dbReference type="ChEBI" id="CHEBI:456215"/>
    </ligand>
</feature>
<feature type="binding site" evidence="1">
    <location>
        <position position="38"/>
    </location>
    <ligand>
        <name>AMP</name>
        <dbReference type="ChEBI" id="CHEBI:456215"/>
    </ligand>
</feature>
<feature type="binding site" evidence="1">
    <location>
        <begin position="59"/>
        <end position="61"/>
    </location>
    <ligand>
        <name>AMP</name>
        <dbReference type="ChEBI" id="CHEBI:456215"/>
    </ligand>
</feature>
<feature type="binding site" evidence="1">
    <location>
        <begin position="88"/>
        <end position="91"/>
    </location>
    <ligand>
        <name>AMP</name>
        <dbReference type="ChEBI" id="CHEBI:456215"/>
    </ligand>
</feature>
<feature type="binding site" evidence="1">
    <location>
        <position position="95"/>
    </location>
    <ligand>
        <name>AMP</name>
        <dbReference type="ChEBI" id="CHEBI:456215"/>
    </ligand>
</feature>
<feature type="binding site" evidence="1">
    <location>
        <position position="126"/>
    </location>
    <ligand>
        <name>ATP</name>
        <dbReference type="ChEBI" id="CHEBI:30616"/>
    </ligand>
</feature>
<feature type="binding site" evidence="1">
    <location>
        <begin position="135"/>
        <end position="136"/>
    </location>
    <ligand>
        <name>ATP</name>
        <dbReference type="ChEBI" id="CHEBI:30616"/>
    </ligand>
</feature>
<feature type="binding site" evidence="1">
    <location>
        <position position="162"/>
    </location>
    <ligand>
        <name>AMP</name>
        <dbReference type="ChEBI" id="CHEBI:456215"/>
    </ligand>
</feature>
<feature type="binding site" evidence="1">
    <location>
        <position position="173"/>
    </location>
    <ligand>
        <name>AMP</name>
        <dbReference type="ChEBI" id="CHEBI:456215"/>
    </ligand>
</feature>
<feature type="binding site" evidence="1">
    <location>
        <position position="201"/>
    </location>
    <ligand>
        <name>ATP</name>
        <dbReference type="ChEBI" id="CHEBI:30616"/>
    </ligand>
</feature>
<organism>
    <name type="scientific">Mycoplasma mobile (strain ATCC 43663 / 163K / NCTC 11711)</name>
    <name type="common">Mesomycoplasma mobile</name>
    <dbReference type="NCBI Taxonomy" id="267748"/>
    <lineage>
        <taxon>Bacteria</taxon>
        <taxon>Bacillati</taxon>
        <taxon>Mycoplasmatota</taxon>
        <taxon>Mycoplasmoidales</taxon>
        <taxon>Metamycoplasmataceae</taxon>
        <taxon>Mesomycoplasma</taxon>
    </lineage>
</organism>
<reference key="1">
    <citation type="journal article" date="2004" name="Genome Res.">
        <title>The complete genome and proteome of Mycoplasma mobile.</title>
        <authorList>
            <person name="Jaffe J.D."/>
            <person name="Stange-Thomann N."/>
            <person name="Smith C."/>
            <person name="DeCaprio D."/>
            <person name="Fisher S."/>
            <person name="Butler J."/>
            <person name="Calvo S."/>
            <person name="Elkins T."/>
            <person name="FitzGerald M.G."/>
            <person name="Hafez N."/>
            <person name="Kodira C.D."/>
            <person name="Major J."/>
            <person name="Wang S."/>
            <person name="Wilkinson J."/>
            <person name="Nicol R."/>
            <person name="Nusbaum C."/>
            <person name="Birren B."/>
            <person name="Berg H.C."/>
            <person name="Church G.M."/>
        </authorList>
    </citation>
    <scope>NUCLEOTIDE SEQUENCE [LARGE SCALE GENOMIC DNA]</scope>
    <source>
        <strain>ATCC 43663 / NCTC 11711 / 163 K</strain>
    </source>
</reference>
<protein>
    <recommendedName>
        <fullName evidence="1">Adenylate kinase</fullName>
        <shortName evidence="1">AK</shortName>
        <ecNumber evidence="1">2.7.4.3</ecNumber>
    </recommendedName>
    <alternativeName>
        <fullName evidence="1">ATP-AMP transphosphorylase</fullName>
    </alternativeName>
    <alternativeName>
        <fullName evidence="1">ATP:AMP phosphotransferase</fullName>
    </alternativeName>
    <alternativeName>
        <fullName evidence="1">Adenylate monophosphate kinase</fullName>
    </alternativeName>
</protein>
<proteinExistence type="inferred from homology"/>
<accession>Q6KI35</accession>
<keyword id="KW-0067">ATP-binding</keyword>
<keyword id="KW-0963">Cytoplasm</keyword>
<keyword id="KW-0418">Kinase</keyword>
<keyword id="KW-0545">Nucleotide biosynthesis</keyword>
<keyword id="KW-0547">Nucleotide-binding</keyword>
<keyword id="KW-1185">Reference proteome</keyword>
<keyword id="KW-0808">Transferase</keyword>
<gene>
    <name evidence="1" type="primary">adk</name>
    <name type="ordered locus">MMOB2550</name>
</gene>
<evidence type="ECO:0000255" key="1">
    <source>
        <dbReference type="HAMAP-Rule" id="MF_00235"/>
    </source>
</evidence>
<sequence length="217" mass="24904">MIRNLIFLGAPGSGKGSTALEISTKYDIEHISTGEIFRNEIKNKTPLGLKVAEIVNDGKYVPDELTNQIVLKKLKELKQENKKFILDGYPRTLNQAMFLSSVLDEKILAVLLEVPTNLIIERLSFRRICPICKSIYHLKYNPSKKGEFCENHLENLTKIEARQDDSEESIKKRLKIYNEETKPMIDYYKKNQSLVVINSEESVKKVASLVIKKVFND</sequence>